<proteinExistence type="predicted"/>
<keyword id="KW-0010">Activator</keyword>
<keyword id="KW-0040">ANK repeat</keyword>
<keyword id="KW-0238">DNA-binding</keyword>
<keyword id="KW-1185">Reference proteome</keyword>
<keyword id="KW-0677">Repeat</keyword>
<keyword id="KW-0804">Transcription</keyword>
<keyword id="KW-0805">Transcription regulation</keyword>
<protein>
    <recommendedName>
        <fullName>Regulatory protein SWI6</fullName>
    </recommendedName>
    <alternativeName>
        <fullName>Cell-cycle box factor subunit SWI6</fullName>
    </alternativeName>
    <alternativeName>
        <fullName>MBF subunit P90</fullName>
    </alternativeName>
    <alternativeName>
        <fullName>Trans-acting activator of HO endonuclease gene</fullName>
    </alternativeName>
</protein>
<name>SWI6_KLULA</name>
<dbReference type="EMBL" id="X74292">
    <property type="protein sequence ID" value="CAA52345.1"/>
    <property type="molecule type" value="Genomic_DNA"/>
</dbReference>
<dbReference type="EMBL" id="CR382123">
    <property type="protein sequence ID" value="CAH01128.1"/>
    <property type="molecule type" value="Genomic_DNA"/>
</dbReference>
<dbReference type="PIR" id="S36657">
    <property type="entry name" value="S36657"/>
</dbReference>
<dbReference type="RefSeq" id="XP_452277.1">
    <property type="nucleotide sequence ID" value="XM_452277.1"/>
</dbReference>
<dbReference type="SMR" id="P40418"/>
<dbReference type="FunCoup" id="P40418">
    <property type="interactions" value="652"/>
</dbReference>
<dbReference type="STRING" id="284590.P40418"/>
<dbReference type="PaxDb" id="284590-P40418"/>
<dbReference type="KEGG" id="kla:KLLA0_C01826g"/>
<dbReference type="eggNOG" id="ENOG502QPWC">
    <property type="taxonomic scope" value="Eukaryota"/>
</dbReference>
<dbReference type="HOGENOM" id="CLU_017827_0_0_1"/>
<dbReference type="InParanoid" id="P40418"/>
<dbReference type="Proteomes" id="UP000000598">
    <property type="component" value="Chromosome C"/>
</dbReference>
<dbReference type="GO" id="GO:0030907">
    <property type="term" value="C:MBF transcription complex"/>
    <property type="evidence" value="ECO:0007669"/>
    <property type="project" value="TreeGrafter"/>
</dbReference>
<dbReference type="GO" id="GO:0033309">
    <property type="term" value="C:SBF transcription complex"/>
    <property type="evidence" value="ECO:0007669"/>
    <property type="project" value="TreeGrafter"/>
</dbReference>
<dbReference type="GO" id="GO:0003677">
    <property type="term" value="F:DNA binding"/>
    <property type="evidence" value="ECO:0007669"/>
    <property type="project" value="UniProtKB-KW"/>
</dbReference>
<dbReference type="GO" id="GO:0003713">
    <property type="term" value="F:transcription coactivator activity"/>
    <property type="evidence" value="ECO:0007669"/>
    <property type="project" value="TreeGrafter"/>
</dbReference>
<dbReference type="GO" id="GO:0045944">
    <property type="term" value="P:positive regulation of transcription by RNA polymerase II"/>
    <property type="evidence" value="ECO:0007669"/>
    <property type="project" value="UniProtKB-ARBA"/>
</dbReference>
<dbReference type="Gene3D" id="3.10.260.30">
    <property type="match status" value="1"/>
</dbReference>
<dbReference type="Gene3D" id="1.25.40.20">
    <property type="entry name" value="Ankyrin repeat-containing domain"/>
    <property type="match status" value="1"/>
</dbReference>
<dbReference type="InterPro" id="IPR002110">
    <property type="entry name" value="Ankyrin_rpt"/>
</dbReference>
<dbReference type="InterPro" id="IPR036770">
    <property type="entry name" value="Ankyrin_rpt-contain_sf"/>
</dbReference>
<dbReference type="InterPro" id="IPR051642">
    <property type="entry name" value="SWI6-like"/>
</dbReference>
<dbReference type="InterPro" id="IPR040822">
    <property type="entry name" value="Swi6_N"/>
</dbReference>
<dbReference type="PANTHER" id="PTHR43828">
    <property type="entry name" value="ASPARAGINASE"/>
    <property type="match status" value="1"/>
</dbReference>
<dbReference type="PANTHER" id="PTHR43828:SF3">
    <property type="entry name" value="CHROMO DOMAIN-CONTAINING PROTEIN"/>
    <property type="match status" value="1"/>
</dbReference>
<dbReference type="Pfam" id="PF00023">
    <property type="entry name" value="Ank"/>
    <property type="match status" value="1"/>
</dbReference>
<dbReference type="Pfam" id="PF18530">
    <property type="entry name" value="Swi6_N"/>
    <property type="match status" value="1"/>
</dbReference>
<dbReference type="SMART" id="SM00248">
    <property type="entry name" value="ANK"/>
    <property type="match status" value="2"/>
</dbReference>
<dbReference type="SUPFAM" id="SSF48403">
    <property type="entry name" value="Ankyrin repeat"/>
    <property type="match status" value="1"/>
</dbReference>
<dbReference type="PROSITE" id="PS50297">
    <property type="entry name" value="ANK_REP_REGION"/>
    <property type="match status" value="2"/>
</dbReference>
<dbReference type="PROSITE" id="PS50088">
    <property type="entry name" value="ANK_REPEAT"/>
    <property type="match status" value="2"/>
</dbReference>
<comment type="function">
    <text>Part of a complex involved in cell-cycle-dependent transcription. SWI4 and SWI6 are required for formation of the cell-cycle box factor-DNA complex. The repeated element in the upstream region of HO (5'-CACGAAAA-3') is called the cell cycle box (CCB).</text>
</comment>
<comment type="subunit">
    <text>MBF contains SWI6 and MBP1; SBF contains SWI6 and SWI4.</text>
</comment>
<feature type="chain" id="PRO_0000067070" description="Regulatory protein SWI6">
    <location>
        <begin position="1"/>
        <end position="769"/>
    </location>
</feature>
<feature type="repeat" description="ANK 1">
    <location>
        <begin position="286"/>
        <end position="315"/>
    </location>
</feature>
<feature type="repeat" description="ANK 2">
    <location>
        <begin position="422"/>
        <end position="451"/>
    </location>
</feature>
<feature type="region of interest" description="Disordered" evidence="1">
    <location>
        <begin position="94"/>
        <end position="202"/>
    </location>
</feature>
<feature type="compositionally biased region" description="Basic and acidic residues" evidence="1">
    <location>
        <begin position="110"/>
        <end position="130"/>
    </location>
</feature>
<feature type="compositionally biased region" description="Low complexity" evidence="1">
    <location>
        <begin position="132"/>
        <end position="152"/>
    </location>
</feature>
<feature type="compositionally biased region" description="Polar residues" evidence="1">
    <location>
        <begin position="164"/>
        <end position="173"/>
    </location>
</feature>
<feature type="sequence conflict" description="In Ref. 2; CAH01128." evidence="2" ref="2">
    <location>
        <begin position="655"/>
        <end position="682"/>
    </location>
</feature>
<evidence type="ECO:0000256" key="1">
    <source>
        <dbReference type="SAM" id="MobiDB-lite"/>
    </source>
</evidence>
<evidence type="ECO:0000305" key="2"/>
<accession>P40418</accession>
<accession>Q6CUW2</accession>
<gene>
    <name type="primary">SWI6</name>
    <name type="ordered locus">KLLA0C01826g</name>
</gene>
<organism>
    <name type="scientific">Kluyveromyces lactis (strain ATCC 8585 / CBS 2359 / DSM 70799 / NBRC 1267 / NRRL Y-1140 / WM37)</name>
    <name type="common">Yeast</name>
    <name type="synonym">Candida sphaerica</name>
    <dbReference type="NCBI Taxonomy" id="284590"/>
    <lineage>
        <taxon>Eukaryota</taxon>
        <taxon>Fungi</taxon>
        <taxon>Dikarya</taxon>
        <taxon>Ascomycota</taxon>
        <taxon>Saccharomycotina</taxon>
        <taxon>Saccharomycetes</taxon>
        <taxon>Saccharomycetales</taxon>
        <taxon>Saccharomycetaceae</taxon>
        <taxon>Kluyveromyces</taxon>
    </lineage>
</organism>
<sequence length="769" mass="86670">MSRPIFKVHKGDRITFQQRLQDGYVCLDQFIPLLTNLSSFNFHRDDPLVENLDDMVTSQFNILIDTDRSGTRWITLQKAHELWDLLQIKDDSGSENLTDHDDDNEANHNGVEDDGQKTPENNGRKTDNHTMENGGTENTNNGNNSSNKNDGNVTAEGSNFRPATITNGTTSRISGGEPDTVKHELLDLPDSPTKRHQTKSVSKIPVFQHDLPTVSTLQKTLPPVSNYSNDERAKLETLLQRILFPETTNLNVAEGYPSVSLTQQVQELDTQFPNVPLNFNIPIDEHGNTSLHWLCSIANLDLLKQLIVFGSDRRIGDKSGESVLVKSVKSVNNYDSGTFEILLDYLYPCIVMVDDMDRTVLHHIVITSGMPGCNAAAKYYLDILMGWIVKKQSRTKESHCVLLEDIDLQWVITHLLNARDSNGDTCLNIAARLGNVAIVEALLDYGADPNIANNSGLCPVDFGAGTQPRFQSNTKNLMATPTKTHETSLDPMAESTSLITNIKSLLSKISNDYGDEIKQHNGKMKELLDTLNIKREALANARDRLAKAKQIQDEYNLLSDRLNNVENTIAEEDQNFQLASRELGLSLDDVQEEGLNSADIAFDADEPFRISYVYTKFEEKIKDEYNNDFELFLKHCNLSQLVHEIYDNFPSRAEIPHPKILKARIKAYNRNELHLDSTLQTIIPHPKILKARIKAYNRNELHLDSTLQTIKDKQKNLESKFRKVLSLCLKIDEEKVDSMLDGLLQAISNEDPEDIDTDEVNNFLESAAE</sequence>
<reference key="1">
    <citation type="journal article" date="1993" name="Science">
        <title>A role for the transcription factors Mbp1 and Swi4 in progression from G1 to S phase.</title>
        <authorList>
            <person name="Koch C."/>
            <person name="Moll T."/>
            <person name="Neuberg M."/>
            <person name="Ahorn H."/>
            <person name="Nasmyth K."/>
        </authorList>
    </citation>
    <scope>NUCLEOTIDE SEQUENCE [GENOMIC DNA]</scope>
</reference>
<reference key="2">
    <citation type="journal article" date="2004" name="Nature">
        <title>Genome evolution in yeasts.</title>
        <authorList>
            <person name="Dujon B."/>
            <person name="Sherman D."/>
            <person name="Fischer G."/>
            <person name="Durrens P."/>
            <person name="Casaregola S."/>
            <person name="Lafontaine I."/>
            <person name="de Montigny J."/>
            <person name="Marck C."/>
            <person name="Neuveglise C."/>
            <person name="Talla E."/>
            <person name="Goffard N."/>
            <person name="Frangeul L."/>
            <person name="Aigle M."/>
            <person name="Anthouard V."/>
            <person name="Babour A."/>
            <person name="Barbe V."/>
            <person name="Barnay S."/>
            <person name="Blanchin S."/>
            <person name="Beckerich J.-M."/>
            <person name="Beyne E."/>
            <person name="Bleykasten C."/>
            <person name="Boisrame A."/>
            <person name="Boyer J."/>
            <person name="Cattolico L."/>
            <person name="Confanioleri F."/>
            <person name="de Daruvar A."/>
            <person name="Despons L."/>
            <person name="Fabre E."/>
            <person name="Fairhead C."/>
            <person name="Ferry-Dumazet H."/>
            <person name="Groppi A."/>
            <person name="Hantraye F."/>
            <person name="Hennequin C."/>
            <person name="Jauniaux N."/>
            <person name="Joyet P."/>
            <person name="Kachouri R."/>
            <person name="Kerrest A."/>
            <person name="Koszul R."/>
            <person name="Lemaire M."/>
            <person name="Lesur I."/>
            <person name="Ma L."/>
            <person name="Muller H."/>
            <person name="Nicaud J.-M."/>
            <person name="Nikolski M."/>
            <person name="Oztas S."/>
            <person name="Ozier-Kalogeropoulos O."/>
            <person name="Pellenz S."/>
            <person name="Potier S."/>
            <person name="Richard G.-F."/>
            <person name="Straub M.-L."/>
            <person name="Suleau A."/>
            <person name="Swennen D."/>
            <person name="Tekaia F."/>
            <person name="Wesolowski-Louvel M."/>
            <person name="Westhof E."/>
            <person name="Wirth B."/>
            <person name="Zeniou-Meyer M."/>
            <person name="Zivanovic Y."/>
            <person name="Bolotin-Fukuhara M."/>
            <person name="Thierry A."/>
            <person name="Bouchier C."/>
            <person name="Caudron B."/>
            <person name="Scarpelli C."/>
            <person name="Gaillardin C."/>
            <person name="Weissenbach J."/>
            <person name="Wincker P."/>
            <person name="Souciet J.-L."/>
        </authorList>
    </citation>
    <scope>NUCLEOTIDE SEQUENCE [LARGE SCALE GENOMIC DNA]</scope>
    <source>
        <strain>ATCC 8585 / CBS 2359 / DSM 70799 / NBRC 1267 / NRRL Y-1140 / WM37</strain>
    </source>
</reference>